<feature type="chain" id="PRO_0000362591" description="ATP synthase subunit a, chloroplastic">
    <location>
        <begin position="1"/>
        <end position="247"/>
    </location>
</feature>
<feature type="transmembrane region" description="Helical" evidence="1">
    <location>
        <begin position="38"/>
        <end position="58"/>
    </location>
</feature>
<feature type="transmembrane region" description="Helical" evidence="1">
    <location>
        <begin position="95"/>
        <end position="115"/>
    </location>
</feature>
<feature type="transmembrane region" description="Helical" evidence="1">
    <location>
        <begin position="134"/>
        <end position="154"/>
    </location>
</feature>
<feature type="transmembrane region" description="Helical" evidence="1">
    <location>
        <begin position="199"/>
        <end position="219"/>
    </location>
</feature>
<feature type="transmembrane region" description="Helical" evidence="1">
    <location>
        <begin position="220"/>
        <end position="240"/>
    </location>
</feature>
<evidence type="ECO:0000255" key="1">
    <source>
        <dbReference type="HAMAP-Rule" id="MF_01393"/>
    </source>
</evidence>
<protein>
    <recommendedName>
        <fullName evidence="1">ATP synthase subunit a, chloroplastic</fullName>
    </recommendedName>
    <alternativeName>
        <fullName evidence="1">ATP synthase F0 sector subunit a</fullName>
    </alternativeName>
    <alternativeName>
        <fullName evidence="1">F-ATPase subunit IV</fullName>
    </alternativeName>
</protein>
<comment type="function">
    <text evidence="1">Key component of the proton channel; it plays a direct role in the translocation of protons across the membrane.</text>
</comment>
<comment type="subunit">
    <text evidence="1">F-type ATPases have 2 components, CF(1) - the catalytic core - and CF(0) - the membrane proton channel. CF(1) has five subunits: alpha(3), beta(3), gamma(1), delta(1), epsilon(1). CF(0) has four main subunits: a, b, b' and c.</text>
</comment>
<comment type="subcellular location">
    <subcellularLocation>
        <location evidence="1">Plastid</location>
        <location evidence="1">Chloroplast thylakoid membrane</location>
        <topology evidence="1">Multi-pass membrane protein</topology>
    </subcellularLocation>
</comment>
<comment type="similarity">
    <text evidence="1">Belongs to the ATPase A chain family.</text>
</comment>
<name>ATPI_PIPCE</name>
<organism>
    <name type="scientific">Piper cenocladum</name>
    <name type="common">Ant piper</name>
    <dbReference type="NCBI Taxonomy" id="398741"/>
    <lineage>
        <taxon>Eukaryota</taxon>
        <taxon>Viridiplantae</taxon>
        <taxon>Streptophyta</taxon>
        <taxon>Embryophyta</taxon>
        <taxon>Tracheophyta</taxon>
        <taxon>Spermatophyta</taxon>
        <taxon>Magnoliopsida</taxon>
        <taxon>Magnoliidae</taxon>
        <taxon>Piperales</taxon>
        <taxon>Piperaceae</taxon>
        <taxon>Piper</taxon>
    </lineage>
</organism>
<proteinExistence type="inferred from homology"/>
<gene>
    <name evidence="1" type="primary">atpI</name>
</gene>
<accession>Q06GS2</accession>
<keyword id="KW-0066">ATP synthesis</keyword>
<keyword id="KW-0138">CF(0)</keyword>
<keyword id="KW-0150">Chloroplast</keyword>
<keyword id="KW-0375">Hydrogen ion transport</keyword>
<keyword id="KW-0406">Ion transport</keyword>
<keyword id="KW-0472">Membrane</keyword>
<keyword id="KW-0934">Plastid</keyword>
<keyword id="KW-0793">Thylakoid</keyword>
<keyword id="KW-0812">Transmembrane</keyword>
<keyword id="KW-1133">Transmembrane helix</keyword>
<keyword id="KW-0813">Transport</keyword>
<reference key="1">
    <citation type="journal article" date="2006" name="BMC Evol. Biol.">
        <title>Complete plastid genome sequences of Drimys, Liriodendron, and Piper: implications for the phylogenetic relationships of magnoliids.</title>
        <authorList>
            <person name="Cai Z."/>
            <person name="Penaflor C."/>
            <person name="Kuehl J.V."/>
            <person name="Leebens-Mack J."/>
            <person name="Carlson J.E."/>
            <person name="dePamphilis C.W."/>
            <person name="Boore J.L."/>
            <person name="Jansen R.K."/>
        </authorList>
    </citation>
    <scope>NUCLEOTIDE SEQUENCE [LARGE SCALE GENOMIC DNA]</scope>
</reference>
<geneLocation type="chloroplast"/>
<dbReference type="EMBL" id="DQ887677">
    <property type="protein sequence ID" value="ABI14460.1"/>
    <property type="molecule type" value="Genomic_DNA"/>
</dbReference>
<dbReference type="RefSeq" id="YP_784461.1">
    <property type="nucleotide sequence ID" value="NC_008457.1"/>
</dbReference>
<dbReference type="SMR" id="Q06GS2"/>
<dbReference type="GeneID" id="4363709"/>
<dbReference type="GO" id="GO:0009535">
    <property type="term" value="C:chloroplast thylakoid membrane"/>
    <property type="evidence" value="ECO:0007669"/>
    <property type="project" value="UniProtKB-SubCell"/>
</dbReference>
<dbReference type="GO" id="GO:0005886">
    <property type="term" value="C:plasma membrane"/>
    <property type="evidence" value="ECO:0007669"/>
    <property type="project" value="UniProtKB-UniRule"/>
</dbReference>
<dbReference type="GO" id="GO:0045259">
    <property type="term" value="C:proton-transporting ATP synthase complex"/>
    <property type="evidence" value="ECO:0007669"/>
    <property type="project" value="UniProtKB-KW"/>
</dbReference>
<dbReference type="GO" id="GO:0046933">
    <property type="term" value="F:proton-transporting ATP synthase activity, rotational mechanism"/>
    <property type="evidence" value="ECO:0007669"/>
    <property type="project" value="UniProtKB-UniRule"/>
</dbReference>
<dbReference type="CDD" id="cd00310">
    <property type="entry name" value="ATP-synt_Fo_a_6"/>
    <property type="match status" value="1"/>
</dbReference>
<dbReference type="FunFam" id="1.20.120.220:FF:000001">
    <property type="entry name" value="ATP synthase subunit a, chloroplastic"/>
    <property type="match status" value="1"/>
</dbReference>
<dbReference type="Gene3D" id="1.20.120.220">
    <property type="entry name" value="ATP synthase, F0 complex, subunit A"/>
    <property type="match status" value="1"/>
</dbReference>
<dbReference type="HAMAP" id="MF_01393">
    <property type="entry name" value="ATP_synth_a_bact"/>
    <property type="match status" value="1"/>
</dbReference>
<dbReference type="InterPro" id="IPR045082">
    <property type="entry name" value="ATP_syn_F0_a_bact/chloroplast"/>
</dbReference>
<dbReference type="InterPro" id="IPR000568">
    <property type="entry name" value="ATP_synth_F0_asu"/>
</dbReference>
<dbReference type="InterPro" id="IPR023011">
    <property type="entry name" value="ATP_synth_F0_asu_AS"/>
</dbReference>
<dbReference type="InterPro" id="IPR035908">
    <property type="entry name" value="F0_ATP_A_sf"/>
</dbReference>
<dbReference type="NCBIfam" id="TIGR01131">
    <property type="entry name" value="ATP_synt_6_or_A"/>
    <property type="match status" value="1"/>
</dbReference>
<dbReference type="PANTHER" id="PTHR42823">
    <property type="entry name" value="ATP SYNTHASE SUBUNIT A, CHLOROPLASTIC"/>
    <property type="match status" value="1"/>
</dbReference>
<dbReference type="PANTHER" id="PTHR42823:SF3">
    <property type="entry name" value="ATP SYNTHASE SUBUNIT A, CHLOROPLASTIC"/>
    <property type="match status" value="1"/>
</dbReference>
<dbReference type="Pfam" id="PF00119">
    <property type="entry name" value="ATP-synt_A"/>
    <property type="match status" value="1"/>
</dbReference>
<dbReference type="PRINTS" id="PR00123">
    <property type="entry name" value="ATPASEA"/>
</dbReference>
<dbReference type="SUPFAM" id="SSF81336">
    <property type="entry name" value="F1F0 ATP synthase subunit A"/>
    <property type="match status" value="1"/>
</dbReference>
<dbReference type="PROSITE" id="PS00449">
    <property type="entry name" value="ATPASE_A"/>
    <property type="match status" value="1"/>
</dbReference>
<sequence length="247" mass="27136">MNVLPCSINTLKGLYDISGVEVGQHLYWQIGGFQVHGQVLITSWVVIAILLGSVTIAVRNPQTIPTNSQNFFEYVLEFIRDLSKTQIGEDYGPWVPFIGTMFLFIFVSNWSGALFPWKIIQLPHGELAAPTNDINTTVALALPTSVAYFYAGLTKKGLGYFSKYIQPTPILLPINVLEDFTKPLSLSFRLFGNILADELVVVVLVSLVPSVVPIPVMFLGLFTSGIQALIFATLAAAYIGESMEGHH</sequence>